<dbReference type="EMBL" id="CP001131">
    <property type="protein sequence ID" value="ACG72379.1"/>
    <property type="molecule type" value="Genomic_DNA"/>
</dbReference>
<dbReference type="RefSeq" id="WP_012525205.1">
    <property type="nucleotide sequence ID" value="NC_011145.1"/>
</dbReference>
<dbReference type="SMR" id="B4UGV4"/>
<dbReference type="KEGG" id="ank:AnaeK_1146"/>
<dbReference type="HOGENOM" id="CLU_130694_5_0_7"/>
<dbReference type="OrthoDB" id="9800587at2"/>
<dbReference type="Proteomes" id="UP000001871">
    <property type="component" value="Chromosome"/>
</dbReference>
<dbReference type="GO" id="GO:0005737">
    <property type="term" value="C:cytoplasm"/>
    <property type="evidence" value="ECO:0007669"/>
    <property type="project" value="TreeGrafter"/>
</dbReference>
<dbReference type="Gene3D" id="3.30.1200.10">
    <property type="entry name" value="YggU-like"/>
    <property type="match status" value="1"/>
</dbReference>
<dbReference type="HAMAP" id="MF_00634">
    <property type="entry name" value="UPF0235"/>
    <property type="match status" value="1"/>
</dbReference>
<dbReference type="InterPro" id="IPR003746">
    <property type="entry name" value="DUF167"/>
</dbReference>
<dbReference type="InterPro" id="IPR036591">
    <property type="entry name" value="YggU-like_sf"/>
</dbReference>
<dbReference type="NCBIfam" id="TIGR00251">
    <property type="entry name" value="DUF167 family protein"/>
    <property type="match status" value="1"/>
</dbReference>
<dbReference type="PANTHER" id="PTHR13420">
    <property type="entry name" value="UPF0235 PROTEIN C15ORF40"/>
    <property type="match status" value="1"/>
</dbReference>
<dbReference type="PANTHER" id="PTHR13420:SF7">
    <property type="entry name" value="UPF0235 PROTEIN C15ORF40"/>
    <property type="match status" value="1"/>
</dbReference>
<dbReference type="Pfam" id="PF02594">
    <property type="entry name" value="DUF167"/>
    <property type="match status" value="1"/>
</dbReference>
<dbReference type="SMART" id="SM01152">
    <property type="entry name" value="DUF167"/>
    <property type="match status" value="1"/>
</dbReference>
<dbReference type="SUPFAM" id="SSF69786">
    <property type="entry name" value="YggU-like"/>
    <property type="match status" value="1"/>
</dbReference>
<organism>
    <name type="scientific">Anaeromyxobacter sp. (strain K)</name>
    <dbReference type="NCBI Taxonomy" id="447217"/>
    <lineage>
        <taxon>Bacteria</taxon>
        <taxon>Pseudomonadati</taxon>
        <taxon>Myxococcota</taxon>
        <taxon>Myxococcia</taxon>
        <taxon>Myxococcales</taxon>
        <taxon>Cystobacterineae</taxon>
        <taxon>Anaeromyxobacteraceae</taxon>
        <taxon>Anaeromyxobacter</taxon>
    </lineage>
</organism>
<feature type="chain" id="PRO_1000130670" description="UPF0235 protein AnaeK_1146">
    <location>
        <begin position="1"/>
        <end position="95"/>
    </location>
</feature>
<proteinExistence type="inferred from homology"/>
<accession>B4UGV4</accession>
<comment type="similarity">
    <text evidence="1">Belongs to the UPF0235 family.</text>
</comment>
<reference key="1">
    <citation type="submission" date="2008-08" db="EMBL/GenBank/DDBJ databases">
        <title>Complete sequence of Anaeromyxobacter sp. K.</title>
        <authorList>
            <consortium name="US DOE Joint Genome Institute"/>
            <person name="Lucas S."/>
            <person name="Copeland A."/>
            <person name="Lapidus A."/>
            <person name="Glavina del Rio T."/>
            <person name="Dalin E."/>
            <person name="Tice H."/>
            <person name="Bruce D."/>
            <person name="Goodwin L."/>
            <person name="Pitluck S."/>
            <person name="Saunders E."/>
            <person name="Brettin T."/>
            <person name="Detter J.C."/>
            <person name="Han C."/>
            <person name="Larimer F."/>
            <person name="Land M."/>
            <person name="Hauser L."/>
            <person name="Kyrpides N."/>
            <person name="Ovchinnikiva G."/>
            <person name="Beliaev A."/>
        </authorList>
    </citation>
    <scope>NUCLEOTIDE SEQUENCE [LARGE SCALE GENOMIC DNA]</scope>
    <source>
        <strain>K</strain>
    </source>
</reference>
<protein>
    <recommendedName>
        <fullName evidence="1">UPF0235 protein AnaeK_1146</fullName>
    </recommendedName>
</protein>
<evidence type="ECO:0000255" key="1">
    <source>
        <dbReference type="HAMAP-Rule" id="MF_00634"/>
    </source>
</evidence>
<sequence>MAWARDEGGAAVLELLVQPRASRTRAVGEHDGRLKIQLAAPPVDGAANAALVEFLAVALGVRRADVALLRGETGRRKTVRVAGITAAAAVAALAS</sequence>
<gene>
    <name type="ordered locus">AnaeK_1146</name>
</gene>
<name>Y1146_ANASK</name>